<accession>A7A0K7</accession>
<gene>
    <name type="ORF">SCY_3531</name>
</gene>
<organism>
    <name type="scientific">Saccharomyces cerevisiae (strain YJM789)</name>
    <name type="common">Baker's yeast</name>
    <dbReference type="NCBI Taxonomy" id="307796"/>
    <lineage>
        <taxon>Eukaryota</taxon>
        <taxon>Fungi</taxon>
        <taxon>Dikarya</taxon>
        <taxon>Ascomycota</taxon>
        <taxon>Saccharomycotina</taxon>
        <taxon>Saccharomycetes</taxon>
        <taxon>Saccharomycetales</taxon>
        <taxon>Saccharomycetaceae</taxon>
        <taxon>Saccharomyces</taxon>
    </lineage>
</organism>
<proteinExistence type="uncertain"/>
<keyword id="KW-0472">Membrane</keyword>
<keyword id="KW-0812">Transmembrane</keyword>
<keyword id="KW-1133">Transmembrane helix</keyword>
<dbReference type="EMBL" id="AAFW02000167">
    <property type="protein sequence ID" value="EDN59498.1"/>
    <property type="molecule type" value="Genomic_DNA"/>
</dbReference>
<dbReference type="SMR" id="A7A0K7"/>
<dbReference type="HOGENOM" id="CLU_127260_0_0_1"/>
<dbReference type="Proteomes" id="UP000007060">
    <property type="component" value="Unassembled WGS sequence"/>
</dbReference>
<dbReference type="GO" id="GO:0005886">
    <property type="term" value="C:plasma membrane"/>
    <property type="evidence" value="ECO:0007669"/>
    <property type="project" value="TreeGrafter"/>
</dbReference>
<dbReference type="GO" id="GO:0015250">
    <property type="term" value="F:water channel activity"/>
    <property type="evidence" value="ECO:0007669"/>
    <property type="project" value="TreeGrafter"/>
</dbReference>
<dbReference type="FunFam" id="1.20.1080.10:FF:000048">
    <property type="entry name" value="Putative uncharacterized protein YLL053C"/>
    <property type="match status" value="1"/>
</dbReference>
<dbReference type="Gene3D" id="1.20.1080.10">
    <property type="entry name" value="Glycerol uptake facilitator protein"/>
    <property type="match status" value="1"/>
</dbReference>
<dbReference type="InterPro" id="IPR023271">
    <property type="entry name" value="Aquaporin-like"/>
</dbReference>
<dbReference type="InterPro" id="IPR034294">
    <property type="entry name" value="Aquaporin_transptr"/>
</dbReference>
<dbReference type="InterPro" id="IPR000425">
    <property type="entry name" value="MIP"/>
</dbReference>
<dbReference type="PANTHER" id="PTHR19139">
    <property type="entry name" value="AQUAPORIN TRANSPORTER"/>
    <property type="match status" value="1"/>
</dbReference>
<dbReference type="PANTHER" id="PTHR19139:SF199">
    <property type="entry name" value="MIP17260P"/>
    <property type="match status" value="1"/>
</dbReference>
<dbReference type="Pfam" id="PF00230">
    <property type="entry name" value="MIP"/>
    <property type="match status" value="1"/>
</dbReference>
<dbReference type="PRINTS" id="PR00783">
    <property type="entry name" value="MINTRINSICP"/>
</dbReference>
<dbReference type="SUPFAM" id="SSF81338">
    <property type="entry name" value="Aquaporin-like"/>
    <property type="match status" value="1"/>
</dbReference>
<reference key="1">
    <citation type="journal article" date="2007" name="Proc. Natl. Acad. Sci. U.S.A.">
        <title>Genome sequencing and comparative analysis of Saccharomyces cerevisiae strain YJM789.</title>
        <authorList>
            <person name="Wei W."/>
            <person name="McCusker J.H."/>
            <person name="Hyman R.W."/>
            <person name="Jones T."/>
            <person name="Ning Y."/>
            <person name="Cao Z."/>
            <person name="Gu Z."/>
            <person name="Bruno D."/>
            <person name="Miranda M."/>
            <person name="Nguyen M."/>
            <person name="Wilhelmy J."/>
            <person name="Komp C."/>
            <person name="Tamse R."/>
            <person name="Wang X."/>
            <person name="Jia P."/>
            <person name="Luedi P."/>
            <person name="Oefner P.J."/>
            <person name="David L."/>
            <person name="Dietrich F.S."/>
            <person name="Li Y."/>
            <person name="Davis R.W."/>
            <person name="Steinmetz L.M."/>
        </authorList>
    </citation>
    <scope>NUCLEOTIDE SEQUENCE [LARGE SCALE GENOMIC DNA]</scope>
    <source>
        <strain>YJM789</strain>
    </source>
</reference>
<comment type="subcellular location">
    <subcellularLocation>
        <location evidence="3">Membrane</location>
        <topology evidence="3">Multi-pass membrane protein</topology>
    </subcellularLocation>
</comment>
<comment type="similarity">
    <text evidence="3">Belongs to the MIP/aquaporin (TC 1.A.8) family.</text>
</comment>
<comment type="caution">
    <text evidence="3">Could be the product of a pseudogene. This is the C-terminal part of aquaporin-2. A natural 11 bp deletion in position 109 leads to a frameshift, which disrupts the gene coding for this protein and produces two ORFs SCY_3532 and SCY_3531. A contiguous sequence for aquaporin-2 can be found in strain Sigma 1278B (AC P0CD89).</text>
</comment>
<name>YLL53_YEAS7</name>
<protein>
    <recommendedName>
        <fullName>Putative uncharacterized protein SCY_3531</fullName>
    </recommendedName>
</protein>
<sequence length="152" mass="16490">MWFPQIIAGMAAGGAASAMTPGKVLFTNALGLGCSRSRGLFLEMFGTAVLCFTVLMTAVEKRETNFMAALPIGISLFMAHMALTGYTGTGVNPARSLGAAVAARYFPHYHWIYWISPLLGAFLAWSVWQLLQILDYTTYVNAEKAAGQKKED</sequence>
<evidence type="ECO:0000250" key="1"/>
<evidence type="ECO:0000255" key="2"/>
<evidence type="ECO:0000305" key="3"/>
<feature type="chain" id="PRO_0000391659" description="Putative uncharacterized protein SCY_3531">
    <location>
        <begin position="1"/>
        <end position="152"/>
    </location>
</feature>
<feature type="topological domain" description="Cytoplasmic" evidence="1">
    <location>
        <begin position="1"/>
        <end position="5"/>
    </location>
</feature>
<feature type="transmembrane region" description="Helical" evidence="2">
    <location>
        <begin position="6"/>
        <end position="26"/>
    </location>
</feature>
<feature type="topological domain" description="Extracellular" evidence="1">
    <location>
        <begin position="27"/>
        <end position="38"/>
    </location>
</feature>
<feature type="transmembrane region" description="Helical" evidence="2">
    <location>
        <begin position="39"/>
        <end position="59"/>
    </location>
</feature>
<feature type="topological domain" description="Cytoplasmic" evidence="1">
    <location>
        <begin position="60"/>
        <end position="65"/>
    </location>
</feature>
<feature type="transmembrane region" description="Helical" evidence="2">
    <location>
        <begin position="66"/>
        <end position="86"/>
    </location>
</feature>
<feature type="topological domain" description="Extracellular" evidence="1">
    <location>
        <begin position="87"/>
        <end position="110"/>
    </location>
</feature>
<feature type="transmembrane region" description="Helical" evidence="2">
    <location>
        <begin position="111"/>
        <end position="131"/>
    </location>
</feature>
<feature type="topological domain" description="Cytoplasmic" evidence="1">
    <location>
        <begin position="132"/>
        <end position="152"/>
    </location>
</feature>
<feature type="short sequence motif" description="NPA">
    <location>
        <begin position="92"/>
        <end position="94"/>
    </location>
</feature>